<dbReference type="EC" id="2.5.1.78" evidence="1"/>
<dbReference type="EMBL" id="CP000359">
    <property type="protein sequence ID" value="ABF44606.1"/>
    <property type="molecule type" value="Genomic_DNA"/>
</dbReference>
<dbReference type="RefSeq" id="WP_011529451.1">
    <property type="nucleotide sequence ID" value="NC_008025.1"/>
</dbReference>
<dbReference type="SMR" id="Q1J1M8"/>
<dbReference type="STRING" id="319795.Dgeo_0303"/>
<dbReference type="KEGG" id="dge:Dgeo_0303"/>
<dbReference type="eggNOG" id="COG0054">
    <property type="taxonomic scope" value="Bacteria"/>
</dbReference>
<dbReference type="HOGENOM" id="CLU_089358_1_2_0"/>
<dbReference type="UniPathway" id="UPA00275">
    <property type="reaction ID" value="UER00404"/>
</dbReference>
<dbReference type="Proteomes" id="UP000002431">
    <property type="component" value="Chromosome"/>
</dbReference>
<dbReference type="GO" id="GO:0005829">
    <property type="term" value="C:cytosol"/>
    <property type="evidence" value="ECO:0007669"/>
    <property type="project" value="TreeGrafter"/>
</dbReference>
<dbReference type="GO" id="GO:0009349">
    <property type="term" value="C:riboflavin synthase complex"/>
    <property type="evidence" value="ECO:0007669"/>
    <property type="project" value="InterPro"/>
</dbReference>
<dbReference type="GO" id="GO:0000906">
    <property type="term" value="F:6,7-dimethyl-8-ribityllumazine synthase activity"/>
    <property type="evidence" value="ECO:0007669"/>
    <property type="project" value="UniProtKB-UniRule"/>
</dbReference>
<dbReference type="GO" id="GO:0009231">
    <property type="term" value="P:riboflavin biosynthetic process"/>
    <property type="evidence" value="ECO:0007669"/>
    <property type="project" value="UniProtKB-UniRule"/>
</dbReference>
<dbReference type="CDD" id="cd09209">
    <property type="entry name" value="Lumazine_synthase-I"/>
    <property type="match status" value="1"/>
</dbReference>
<dbReference type="FunFam" id="3.40.50.960:FF:000001">
    <property type="entry name" value="6,7-dimethyl-8-ribityllumazine synthase"/>
    <property type="match status" value="1"/>
</dbReference>
<dbReference type="Gene3D" id="3.40.50.960">
    <property type="entry name" value="Lumazine/riboflavin synthase"/>
    <property type="match status" value="1"/>
</dbReference>
<dbReference type="HAMAP" id="MF_00178">
    <property type="entry name" value="Lumazine_synth"/>
    <property type="match status" value="1"/>
</dbReference>
<dbReference type="InterPro" id="IPR034964">
    <property type="entry name" value="LS"/>
</dbReference>
<dbReference type="InterPro" id="IPR002180">
    <property type="entry name" value="LS/RS"/>
</dbReference>
<dbReference type="InterPro" id="IPR036467">
    <property type="entry name" value="LS/RS_sf"/>
</dbReference>
<dbReference type="NCBIfam" id="TIGR00114">
    <property type="entry name" value="lumazine-synth"/>
    <property type="match status" value="1"/>
</dbReference>
<dbReference type="PANTHER" id="PTHR21058:SF0">
    <property type="entry name" value="6,7-DIMETHYL-8-RIBITYLLUMAZINE SYNTHASE"/>
    <property type="match status" value="1"/>
</dbReference>
<dbReference type="PANTHER" id="PTHR21058">
    <property type="entry name" value="6,7-DIMETHYL-8-RIBITYLLUMAZINE SYNTHASE DMRL SYNTHASE LUMAZINE SYNTHASE"/>
    <property type="match status" value="1"/>
</dbReference>
<dbReference type="Pfam" id="PF00885">
    <property type="entry name" value="DMRL_synthase"/>
    <property type="match status" value="1"/>
</dbReference>
<dbReference type="SUPFAM" id="SSF52121">
    <property type="entry name" value="Lumazine synthase"/>
    <property type="match status" value="1"/>
</dbReference>
<organism>
    <name type="scientific">Deinococcus geothermalis (strain DSM 11300 / CIP 105573 / AG-3a)</name>
    <dbReference type="NCBI Taxonomy" id="319795"/>
    <lineage>
        <taxon>Bacteria</taxon>
        <taxon>Thermotogati</taxon>
        <taxon>Deinococcota</taxon>
        <taxon>Deinococci</taxon>
        <taxon>Deinococcales</taxon>
        <taxon>Deinococcaceae</taxon>
        <taxon>Deinococcus</taxon>
    </lineage>
</organism>
<name>RISB_DEIGD</name>
<protein>
    <recommendedName>
        <fullName evidence="1">6,7-dimethyl-8-ribityllumazine synthase</fullName>
        <shortName evidence="1">DMRL synthase</shortName>
        <shortName evidence="1">LS</shortName>
        <shortName evidence="1">Lumazine synthase</shortName>
        <ecNumber evidence="1">2.5.1.78</ecNumber>
    </recommendedName>
</protein>
<proteinExistence type="inferred from homology"/>
<comment type="function">
    <text evidence="1">Catalyzes the formation of 6,7-dimethyl-8-ribityllumazine by condensation of 5-amino-6-(D-ribitylamino)uracil with 3,4-dihydroxy-2-butanone 4-phosphate. This is the penultimate step in the biosynthesis of riboflavin.</text>
</comment>
<comment type="catalytic activity">
    <reaction evidence="1">
        <text>(2S)-2-hydroxy-3-oxobutyl phosphate + 5-amino-6-(D-ribitylamino)uracil = 6,7-dimethyl-8-(1-D-ribityl)lumazine + phosphate + 2 H2O + H(+)</text>
        <dbReference type="Rhea" id="RHEA:26152"/>
        <dbReference type="ChEBI" id="CHEBI:15377"/>
        <dbReference type="ChEBI" id="CHEBI:15378"/>
        <dbReference type="ChEBI" id="CHEBI:15934"/>
        <dbReference type="ChEBI" id="CHEBI:43474"/>
        <dbReference type="ChEBI" id="CHEBI:58201"/>
        <dbReference type="ChEBI" id="CHEBI:58830"/>
        <dbReference type="EC" id="2.5.1.78"/>
    </reaction>
</comment>
<comment type="pathway">
    <text evidence="1">Cofactor biosynthesis; riboflavin biosynthesis; riboflavin from 2-hydroxy-3-oxobutyl phosphate and 5-amino-6-(D-ribitylamino)uracil: step 1/2.</text>
</comment>
<comment type="similarity">
    <text evidence="1">Belongs to the DMRL synthase family.</text>
</comment>
<gene>
    <name evidence="1" type="primary">ribH</name>
    <name type="ordered locus">Dgeo_0303</name>
</gene>
<accession>Q1J1M8</accession>
<sequence length="154" mass="16487">MNRIEGHLLAADLRFAIVSTRWNHLIVDRLVEGAELAFVQHGGKSENLDHFIVPGSHELPLVARRLAETGKYDAVVCLGAVIRGDTDHYKFVAGGAASGILNSALHTGVPIAFGVLTTETVEQALNRAGIKAGNKGAEATLAMIETVNLLRQIR</sequence>
<keyword id="KW-0686">Riboflavin biosynthesis</keyword>
<keyword id="KW-0808">Transferase</keyword>
<reference key="1">
    <citation type="submission" date="2006-04" db="EMBL/GenBank/DDBJ databases">
        <title>Complete sequence of chromosome of Deinococcus geothermalis DSM 11300.</title>
        <authorList>
            <person name="Copeland A."/>
            <person name="Lucas S."/>
            <person name="Lapidus A."/>
            <person name="Barry K."/>
            <person name="Detter J.C."/>
            <person name="Glavina del Rio T."/>
            <person name="Hammon N."/>
            <person name="Israni S."/>
            <person name="Dalin E."/>
            <person name="Tice H."/>
            <person name="Pitluck S."/>
            <person name="Brettin T."/>
            <person name="Bruce D."/>
            <person name="Han C."/>
            <person name="Tapia R."/>
            <person name="Saunders E."/>
            <person name="Gilna P."/>
            <person name="Schmutz J."/>
            <person name="Larimer F."/>
            <person name="Land M."/>
            <person name="Hauser L."/>
            <person name="Kyrpides N."/>
            <person name="Kim E."/>
            <person name="Daly M.J."/>
            <person name="Fredrickson J.K."/>
            <person name="Makarova K.S."/>
            <person name="Gaidamakova E.K."/>
            <person name="Zhai M."/>
            <person name="Richardson P."/>
        </authorList>
    </citation>
    <scope>NUCLEOTIDE SEQUENCE [LARGE SCALE GENOMIC DNA]</scope>
    <source>
        <strain>DSM 11300 / CIP 105573 / AG-3a</strain>
    </source>
</reference>
<evidence type="ECO:0000255" key="1">
    <source>
        <dbReference type="HAMAP-Rule" id="MF_00178"/>
    </source>
</evidence>
<feature type="chain" id="PRO_1000040413" description="6,7-dimethyl-8-ribityllumazine synthase">
    <location>
        <begin position="1"/>
        <end position="154"/>
    </location>
</feature>
<feature type="active site" description="Proton donor" evidence="1">
    <location>
        <position position="88"/>
    </location>
</feature>
<feature type="binding site" evidence="1">
    <location>
        <position position="22"/>
    </location>
    <ligand>
        <name>5-amino-6-(D-ribitylamino)uracil</name>
        <dbReference type="ChEBI" id="CHEBI:15934"/>
    </ligand>
</feature>
<feature type="binding site" evidence="1">
    <location>
        <begin position="56"/>
        <end position="58"/>
    </location>
    <ligand>
        <name>5-amino-6-(D-ribitylamino)uracil</name>
        <dbReference type="ChEBI" id="CHEBI:15934"/>
    </ligand>
</feature>
<feature type="binding site" evidence="1">
    <location>
        <begin position="80"/>
        <end position="82"/>
    </location>
    <ligand>
        <name>5-amino-6-(D-ribitylamino)uracil</name>
        <dbReference type="ChEBI" id="CHEBI:15934"/>
    </ligand>
</feature>
<feature type="binding site" evidence="1">
    <location>
        <begin position="85"/>
        <end position="86"/>
    </location>
    <ligand>
        <name>(2S)-2-hydroxy-3-oxobutyl phosphate</name>
        <dbReference type="ChEBI" id="CHEBI:58830"/>
    </ligand>
</feature>
<feature type="binding site" evidence="1">
    <location>
        <position position="113"/>
    </location>
    <ligand>
        <name>5-amino-6-(D-ribitylamino)uracil</name>
        <dbReference type="ChEBI" id="CHEBI:15934"/>
    </ligand>
</feature>
<feature type="binding site" evidence="1">
    <location>
        <position position="127"/>
    </location>
    <ligand>
        <name>(2S)-2-hydroxy-3-oxobutyl phosphate</name>
        <dbReference type="ChEBI" id="CHEBI:58830"/>
    </ligand>
</feature>